<evidence type="ECO:0000255" key="1">
    <source>
        <dbReference type="HAMAP-Rule" id="MF_01872"/>
    </source>
</evidence>
<dbReference type="EC" id="2.1.1.223" evidence="1"/>
<dbReference type="EMBL" id="CU928145">
    <property type="protein sequence ID" value="CAU98734.1"/>
    <property type="molecule type" value="Genomic_DNA"/>
</dbReference>
<dbReference type="SMR" id="B7LDG8"/>
<dbReference type="KEGG" id="eck:EC55989_2864"/>
<dbReference type="HOGENOM" id="CLU_061983_0_0_6"/>
<dbReference type="Proteomes" id="UP000000746">
    <property type="component" value="Chromosome"/>
</dbReference>
<dbReference type="GO" id="GO:0005737">
    <property type="term" value="C:cytoplasm"/>
    <property type="evidence" value="ECO:0007669"/>
    <property type="project" value="UniProtKB-SubCell"/>
</dbReference>
<dbReference type="GO" id="GO:0003676">
    <property type="term" value="F:nucleic acid binding"/>
    <property type="evidence" value="ECO:0007669"/>
    <property type="project" value="InterPro"/>
</dbReference>
<dbReference type="GO" id="GO:0016430">
    <property type="term" value="F:tRNA (adenine-N6)-methyltransferase activity"/>
    <property type="evidence" value="ECO:0007669"/>
    <property type="project" value="UniProtKB-UniRule"/>
</dbReference>
<dbReference type="GO" id="GO:0032259">
    <property type="term" value="P:methylation"/>
    <property type="evidence" value="ECO:0007669"/>
    <property type="project" value="UniProtKB-KW"/>
</dbReference>
<dbReference type="GO" id="GO:0008033">
    <property type="term" value="P:tRNA processing"/>
    <property type="evidence" value="ECO:0007669"/>
    <property type="project" value="UniProtKB-UniRule"/>
</dbReference>
<dbReference type="CDD" id="cd02440">
    <property type="entry name" value="AdoMet_MTases"/>
    <property type="match status" value="1"/>
</dbReference>
<dbReference type="FunFam" id="3.40.50.150:FF:000087">
    <property type="entry name" value="tRNA1(Val) (adenine(37)-N6)-methyltransferase"/>
    <property type="match status" value="1"/>
</dbReference>
<dbReference type="Gene3D" id="3.40.50.150">
    <property type="entry name" value="Vaccinia Virus protein VP39"/>
    <property type="match status" value="1"/>
</dbReference>
<dbReference type="HAMAP" id="MF_01872">
    <property type="entry name" value="tRNA_methyltr_YfiC"/>
    <property type="match status" value="1"/>
</dbReference>
<dbReference type="InterPro" id="IPR002052">
    <property type="entry name" value="DNA_methylase_N6_adenine_CS"/>
</dbReference>
<dbReference type="InterPro" id="IPR029063">
    <property type="entry name" value="SAM-dependent_MTases_sf"/>
</dbReference>
<dbReference type="InterPro" id="IPR007848">
    <property type="entry name" value="Small_mtfrase_dom"/>
</dbReference>
<dbReference type="InterPro" id="IPR050210">
    <property type="entry name" value="tRNA_Adenine-N(6)_MTase"/>
</dbReference>
<dbReference type="InterPro" id="IPR022882">
    <property type="entry name" value="tRNA_adenine-N6_MeTrfase"/>
</dbReference>
<dbReference type="NCBIfam" id="NF047853">
    <property type="entry name" value="tRm6a37MtseTrmN"/>
    <property type="match status" value="1"/>
</dbReference>
<dbReference type="PANTHER" id="PTHR47739">
    <property type="entry name" value="TRNA1(VAL) (ADENINE(37)-N6)-METHYLTRANSFERASE"/>
    <property type="match status" value="1"/>
</dbReference>
<dbReference type="PANTHER" id="PTHR47739:SF1">
    <property type="entry name" value="TRNA1(VAL) (ADENINE(37)-N6)-METHYLTRANSFERASE"/>
    <property type="match status" value="1"/>
</dbReference>
<dbReference type="Pfam" id="PF05175">
    <property type="entry name" value="MTS"/>
    <property type="match status" value="1"/>
</dbReference>
<dbReference type="SUPFAM" id="SSF53335">
    <property type="entry name" value="S-adenosyl-L-methionine-dependent methyltransferases"/>
    <property type="match status" value="1"/>
</dbReference>
<dbReference type="PROSITE" id="PS00092">
    <property type="entry name" value="N6_MTASE"/>
    <property type="match status" value="1"/>
</dbReference>
<sequence>MSQSTSVLRRNGFTFKQFFVAHDRCAMKVGTDGILLGAWAPVAGVKRCLDIGAGSGLLALMLAQRTDDSVIIDAVELESEAAAQAQENINQSPWAERINVHTADIQQWITQQTVRFDLIISNPPYYQQGVECATPQREQARYTTTLDHPSLLTCAAECITEEGFFCVVLPEQIGNGFTELALSMGWHLRLRTDVAENEARLPHRVLLAFSPQAGECFSDRLVIRGPDQNYSEAYTALTQAFYLFM</sequence>
<protein>
    <recommendedName>
        <fullName evidence="1">tRNA1(Val) (adenine(37)-N6)-methyltransferase</fullName>
        <ecNumber evidence="1">2.1.1.223</ecNumber>
    </recommendedName>
    <alternativeName>
        <fullName evidence="1">tRNA m6A37 methyltransferase</fullName>
    </alternativeName>
</protein>
<reference key="1">
    <citation type="journal article" date="2009" name="PLoS Genet.">
        <title>Organised genome dynamics in the Escherichia coli species results in highly diverse adaptive paths.</title>
        <authorList>
            <person name="Touchon M."/>
            <person name="Hoede C."/>
            <person name="Tenaillon O."/>
            <person name="Barbe V."/>
            <person name="Baeriswyl S."/>
            <person name="Bidet P."/>
            <person name="Bingen E."/>
            <person name="Bonacorsi S."/>
            <person name="Bouchier C."/>
            <person name="Bouvet O."/>
            <person name="Calteau A."/>
            <person name="Chiapello H."/>
            <person name="Clermont O."/>
            <person name="Cruveiller S."/>
            <person name="Danchin A."/>
            <person name="Diard M."/>
            <person name="Dossat C."/>
            <person name="Karoui M.E."/>
            <person name="Frapy E."/>
            <person name="Garry L."/>
            <person name="Ghigo J.M."/>
            <person name="Gilles A.M."/>
            <person name="Johnson J."/>
            <person name="Le Bouguenec C."/>
            <person name="Lescat M."/>
            <person name="Mangenot S."/>
            <person name="Martinez-Jehanne V."/>
            <person name="Matic I."/>
            <person name="Nassif X."/>
            <person name="Oztas S."/>
            <person name="Petit M.A."/>
            <person name="Pichon C."/>
            <person name="Rouy Z."/>
            <person name="Ruf C.S."/>
            <person name="Schneider D."/>
            <person name="Tourret J."/>
            <person name="Vacherie B."/>
            <person name="Vallenet D."/>
            <person name="Medigue C."/>
            <person name="Rocha E.P.C."/>
            <person name="Denamur E."/>
        </authorList>
    </citation>
    <scope>NUCLEOTIDE SEQUENCE [LARGE SCALE GENOMIC DNA]</scope>
    <source>
        <strain>55989 / EAEC</strain>
    </source>
</reference>
<comment type="function">
    <text evidence="1">Specifically methylates the adenine in position 37 of tRNA(1)(Val) (anticodon cmo5UAC).</text>
</comment>
<comment type="catalytic activity">
    <reaction evidence="1">
        <text>adenosine(37) in tRNA1(Val) + S-adenosyl-L-methionine = N(6)-methyladenosine(37) in tRNA1(Val) + S-adenosyl-L-homocysteine + H(+)</text>
        <dbReference type="Rhea" id="RHEA:43160"/>
        <dbReference type="Rhea" id="RHEA-COMP:10369"/>
        <dbReference type="Rhea" id="RHEA-COMP:10370"/>
        <dbReference type="ChEBI" id="CHEBI:15378"/>
        <dbReference type="ChEBI" id="CHEBI:57856"/>
        <dbReference type="ChEBI" id="CHEBI:59789"/>
        <dbReference type="ChEBI" id="CHEBI:74411"/>
        <dbReference type="ChEBI" id="CHEBI:74449"/>
        <dbReference type="EC" id="2.1.1.223"/>
    </reaction>
</comment>
<comment type="subcellular location">
    <subcellularLocation>
        <location evidence="1">Cytoplasm</location>
    </subcellularLocation>
</comment>
<comment type="similarity">
    <text evidence="1">Belongs to the methyltransferase superfamily. tRNA (adenine-N(6)-)-methyltransferase family.</text>
</comment>
<organism>
    <name type="scientific">Escherichia coli (strain 55989 / EAEC)</name>
    <dbReference type="NCBI Taxonomy" id="585055"/>
    <lineage>
        <taxon>Bacteria</taxon>
        <taxon>Pseudomonadati</taxon>
        <taxon>Pseudomonadota</taxon>
        <taxon>Gammaproteobacteria</taxon>
        <taxon>Enterobacterales</taxon>
        <taxon>Enterobacteriaceae</taxon>
        <taxon>Escherichia</taxon>
    </lineage>
</organism>
<accession>B7LDG8</accession>
<name>TRMN6_ECO55</name>
<feature type="chain" id="PRO_0000387355" description="tRNA1(Val) (adenine(37)-N6)-methyltransferase">
    <location>
        <begin position="1"/>
        <end position="245"/>
    </location>
</feature>
<keyword id="KW-0963">Cytoplasm</keyword>
<keyword id="KW-0489">Methyltransferase</keyword>
<keyword id="KW-1185">Reference proteome</keyword>
<keyword id="KW-0949">S-adenosyl-L-methionine</keyword>
<keyword id="KW-0808">Transferase</keyword>
<keyword id="KW-0819">tRNA processing</keyword>
<gene>
    <name evidence="1" type="primary">yfiC</name>
    <name type="ordered locus">EC55989_2864</name>
</gene>
<proteinExistence type="inferred from homology"/>